<comment type="function">
    <text evidence="1">Catalyzes the NAD(+)-dependent oxidation of L-fucose, yielding L-fucono-1,5-lactone, which rapidly converts spontaneously to L-fucone-1,4-lactone. Can also act on D-arabinose and L-galactose, with lower catalytic efficiency. Does not use NADPH. May be the initial enzyme of the putative L-fucose degradation pathway in mammals.</text>
</comment>
<comment type="catalytic activity">
    <reaction evidence="1">
        <text>L-fucose + NAD(+) = L-fucono-1,5-lactone + NADH + H(+)</text>
        <dbReference type="Rhea" id="RHEA:81515"/>
        <dbReference type="ChEBI" id="CHEBI:2181"/>
        <dbReference type="ChEBI" id="CHEBI:15378"/>
        <dbReference type="ChEBI" id="CHEBI:57540"/>
        <dbReference type="ChEBI" id="CHEBI:57945"/>
        <dbReference type="ChEBI" id="CHEBI:81457"/>
        <dbReference type="EC" id="1.1.1.122"/>
    </reaction>
    <physiologicalReaction direction="left-to-right" evidence="1">
        <dbReference type="Rhea" id="RHEA:81516"/>
    </physiologicalReaction>
</comment>
<comment type="catalytic activity">
    <reaction evidence="1">
        <text>D-arabinose + NAD(+) = D-arabinono-1,5-lactone + NADH + H(+)</text>
        <dbReference type="Rhea" id="RHEA:81519"/>
        <dbReference type="ChEBI" id="CHEBI:15378"/>
        <dbReference type="ChEBI" id="CHEBI:46994"/>
        <dbReference type="ChEBI" id="CHEBI:57540"/>
        <dbReference type="ChEBI" id="CHEBI:57945"/>
        <dbReference type="ChEBI" id="CHEBI:194242"/>
        <dbReference type="EC" id="1.1.1.122"/>
    </reaction>
</comment>
<comment type="catalytic activity">
    <reaction evidence="1">
        <text>L-galactose + NAD(+) = L-galactono-1,5-lactone + NADH + H(+)</text>
        <dbReference type="Rhea" id="RHEA:81523"/>
        <dbReference type="ChEBI" id="CHEBI:15378"/>
        <dbReference type="ChEBI" id="CHEBI:37619"/>
        <dbReference type="ChEBI" id="CHEBI:57540"/>
        <dbReference type="ChEBI" id="CHEBI:57945"/>
        <dbReference type="ChEBI" id="CHEBI:182410"/>
        <dbReference type="EC" id="1.1.1.122"/>
    </reaction>
</comment>
<comment type="pathway">
    <text evidence="3">Carbohydrate degradation; L-fucose degradation.</text>
</comment>
<comment type="subunit">
    <text evidence="1">Homotetramer.</text>
</comment>
<comment type="subcellular location">
    <subcellularLocation>
        <location evidence="1">Cytoplasm</location>
    </subcellularLocation>
</comment>
<comment type="tissue specificity">
    <text>Detected in retina.</text>
</comment>
<comment type="similarity">
    <text evidence="3">Belongs to the short-chain dehydrogenases/reductases (SDR) family.</text>
</comment>
<comment type="caution">
    <text evidence="1">Was reported as a 17-beta-hydroxysteroid dehydrogenase that catalyzes estradiol and testosterone oxidation in the C17-hydroxyl group to form estrone and androstenedione, respectively (in vitro). However, HSD17B14 is very inefficient in oxidizing steroids, testosterone, suggesting that steroids cannot be physiological substrates for HSD17B14.</text>
</comment>
<keyword id="KW-0119">Carbohydrate metabolism</keyword>
<keyword id="KW-0963">Cytoplasm</keyword>
<keyword id="KW-0294">Fucose metabolism</keyword>
<keyword id="KW-0443">Lipid metabolism</keyword>
<keyword id="KW-0520">NAD</keyword>
<keyword id="KW-0560">Oxidoreductase</keyword>
<keyword id="KW-1185">Reference proteome</keyword>
<keyword id="KW-0753">Steroid metabolism</keyword>
<name>DHB14_BOVIN</name>
<protein>
    <recommendedName>
        <fullName evidence="1">L-fucose dehydrogenase</fullName>
        <ecNumber evidence="1">1.1.1.122</ecNumber>
    </recommendedName>
    <alternativeName>
        <fullName>17-beta-hydroxysteroid dehydrogenase DHRS10</fullName>
    </alternativeName>
    <alternativeName>
        <fullName>Dehydrogenase/reductase SDR family member 10</fullName>
    </alternativeName>
    <alternativeName>
        <fullName>Retinal short-chain dehydrogenase/reductase retSDR3</fullName>
    </alternativeName>
</protein>
<accession>Q9MYP6</accession>
<sequence>MAMGTRYAGKVVIVTGGGRGIGAGIVRAFVESGAQVVICDKDEARGRAVERELPGTVFLLCDVTREEDVRTLVSETIRRFGRLDCIVNNAGYHPPPQWPEETSAQGFRQLLELNLLGTYTLTKLALPHLRKSRGNVINISSLVGAIGQSQAVPYVATKGAVTAMTKALALDESQYGVRVNCISPGNIWTPLWEELAASTPDPTATIREGTLAQPLGRMGQPAEVAAAAVFLASEATFCTGTELLVTGGAELGYGRKAGQAAPAEAPTTPS</sequence>
<feature type="chain" id="PRO_0000054653" description="L-fucose dehydrogenase">
    <location>
        <begin position="1"/>
        <end position="270"/>
    </location>
</feature>
<feature type="active site" description="Proton acceptor" evidence="2">
    <location>
        <position position="154"/>
    </location>
</feature>
<feature type="binding site" evidence="1">
    <location>
        <position position="19"/>
    </location>
    <ligand>
        <name>NAD(+)</name>
        <dbReference type="ChEBI" id="CHEBI:57540"/>
    </ligand>
</feature>
<feature type="binding site" evidence="1">
    <location>
        <position position="21"/>
    </location>
    <ligand>
        <name>NAD(+)</name>
        <dbReference type="ChEBI" id="CHEBI:57540"/>
    </ligand>
</feature>
<feature type="binding site" evidence="1">
    <location>
        <position position="40"/>
    </location>
    <ligand>
        <name>NAD(+)</name>
        <dbReference type="ChEBI" id="CHEBI:57540"/>
    </ligand>
</feature>
<feature type="binding site" evidence="1">
    <location>
        <position position="41"/>
    </location>
    <ligand>
        <name>NAD(+)</name>
        <dbReference type="ChEBI" id="CHEBI:57540"/>
    </ligand>
</feature>
<feature type="binding site" evidence="1">
    <location>
        <position position="62"/>
    </location>
    <ligand>
        <name>NAD(+)</name>
        <dbReference type="ChEBI" id="CHEBI:57540"/>
    </ligand>
</feature>
<feature type="binding site" evidence="1">
    <location>
        <position position="63"/>
    </location>
    <ligand>
        <name>NAD(+)</name>
        <dbReference type="ChEBI" id="CHEBI:57540"/>
    </ligand>
</feature>
<feature type="binding site" evidence="1">
    <location>
        <position position="89"/>
    </location>
    <ligand>
        <name>NAD(+)</name>
        <dbReference type="ChEBI" id="CHEBI:57540"/>
    </ligand>
</feature>
<feature type="binding site" evidence="1">
    <location>
        <position position="154"/>
    </location>
    <ligand>
        <name>NAD(+)</name>
        <dbReference type="ChEBI" id="CHEBI:57540"/>
    </ligand>
</feature>
<feature type="binding site" evidence="1">
    <location>
        <position position="158"/>
    </location>
    <ligand>
        <name>NAD(+)</name>
        <dbReference type="ChEBI" id="CHEBI:57540"/>
    </ligand>
</feature>
<feature type="binding site" evidence="1">
    <location>
        <position position="187"/>
    </location>
    <ligand>
        <name>NAD(+)</name>
        <dbReference type="ChEBI" id="CHEBI:57540"/>
    </ligand>
</feature>
<feature type="binding site" evidence="1">
    <location>
        <position position="189"/>
    </location>
    <ligand>
        <name>NAD(+)</name>
        <dbReference type="ChEBI" id="CHEBI:57540"/>
    </ligand>
</feature>
<feature type="binding site" evidence="1">
    <location>
        <position position="191"/>
    </location>
    <ligand>
        <name>NAD(+)</name>
        <dbReference type="ChEBI" id="CHEBI:57540"/>
    </ligand>
</feature>
<proteinExistence type="evidence at transcript level"/>
<organism>
    <name type="scientific">Bos taurus</name>
    <name type="common">Bovine</name>
    <dbReference type="NCBI Taxonomy" id="9913"/>
    <lineage>
        <taxon>Eukaryota</taxon>
        <taxon>Metazoa</taxon>
        <taxon>Chordata</taxon>
        <taxon>Craniata</taxon>
        <taxon>Vertebrata</taxon>
        <taxon>Euteleostomi</taxon>
        <taxon>Mammalia</taxon>
        <taxon>Eutheria</taxon>
        <taxon>Laurasiatheria</taxon>
        <taxon>Artiodactyla</taxon>
        <taxon>Ruminantia</taxon>
        <taxon>Pecora</taxon>
        <taxon>Bovidae</taxon>
        <taxon>Bovinae</taxon>
        <taxon>Bos</taxon>
    </lineage>
</organism>
<gene>
    <name type="primary">HSD17B14</name>
    <name type="synonym">DHRS10</name>
    <name type="synonym">SDR3</name>
</gene>
<reference key="1">
    <citation type="submission" date="2000-02" db="EMBL/GenBank/DDBJ databases">
        <authorList>
            <person name="Haeseleer F."/>
            <person name="Palczewski K."/>
        </authorList>
    </citation>
    <scope>NUCLEOTIDE SEQUENCE [MRNA]</scope>
    <source>
        <tissue>Retina</tissue>
    </source>
</reference>
<evidence type="ECO:0000250" key="1">
    <source>
        <dbReference type="UniProtKB" id="Q9BPX1"/>
    </source>
</evidence>
<evidence type="ECO:0000255" key="2">
    <source>
        <dbReference type="PROSITE-ProRule" id="PRU10001"/>
    </source>
</evidence>
<evidence type="ECO:0000305" key="3"/>
<dbReference type="EC" id="1.1.1.122" evidence="1"/>
<dbReference type="EMBL" id="AF202997">
    <property type="protein sequence ID" value="AAF62401.1"/>
    <property type="molecule type" value="mRNA"/>
</dbReference>
<dbReference type="EMBL" id="AF238859">
    <property type="protein sequence ID" value="AAF44666.1"/>
    <property type="molecule type" value="mRNA"/>
</dbReference>
<dbReference type="RefSeq" id="NP_777126.1">
    <property type="nucleotide sequence ID" value="NM_174701.2"/>
</dbReference>
<dbReference type="SMR" id="Q9MYP6"/>
<dbReference type="FunCoup" id="Q9MYP6">
    <property type="interactions" value="17"/>
</dbReference>
<dbReference type="IntAct" id="Q9MYP6">
    <property type="interactions" value="1"/>
</dbReference>
<dbReference type="STRING" id="9913.ENSBTAP00000012090"/>
<dbReference type="PaxDb" id="9913-ENSBTAP00000012090"/>
<dbReference type="PeptideAtlas" id="Q9MYP6"/>
<dbReference type="GeneID" id="282652"/>
<dbReference type="KEGG" id="bta:282652"/>
<dbReference type="CTD" id="51171"/>
<dbReference type="VEuPathDB" id="HostDB:ENSBTAG00000009174"/>
<dbReference type="eggNOG" id="KOG0725">
    <property type="taxonomic scope" value="Eukaryota"/>
</dbReference>
<dbReference type="HOGENOM" id="CLU_010194_1_0_1"/>
<dbReference type="InParanoid" id="Q9MYP6"/>
<dbReference type="OMA" id="AAYQMSQ"/>
<dbReference type="OrthoDB" id="47007at2759"/>
<dbReference type="TreeFam" id="TF354307"/>
<dbReference type="Reactome" id="R-BTA-193144">
    <property type="pathway name" value="Estrogen biosynthesis"/>
</dbReference>
<dbReference type="UniPathway" id="UPA00563"/>
<dbReference type="Proteomes" id="UP000009136">
    <property type="component" value="Chromosome 18"/>
</dbReference>
<dbReference type="Bgee" id="ENSBTAG00000009174">
    <property type="expression patterns" value="Expressed in caput epididymis and 89 other cell types or tissues"/>
</dbReference>
<dbReference type="GO" id="GO:0005829">
    <property type="term" value="C:cytosol"/>
    <property type="evidence" value="ECO:0000250"/>
    <property type="project" value="UniProtKB"/>
</dbReference>
<dbReference type="GO" id="GO:0047834">
    <property type="term" value="F:D-threo-aldose 1-dehydrogenase activity"/>
    <property type="evidence" value="ECO:0000250"/>
    <property type="project" value="UniProtKB"/>
</dbReference>
<dbReference type="GO" id="GO:0004303">
    <property type="term" value="F:estradiol 17-beta-dehydrogenase [NAD(P)+] activity"/>
    <property type="evidence" value="ECO:0000318"/>
    <property type="project" value="GO_Central"/>
</dbReference>
<dbReference type="GO" id="GO:0042355">
    <property type="term" value="P:L-fucose catabolic process"/>
    <property type="evidence" value="ECO:0000250"/>
    <property type="project" value="UniProtKB"/>
</dbReference>
<dbReference type="GO" id="GO:0006706">
    <property type="term" value="P:steroid catabolic process"/>
    <property type="evidence" value="ECO:0000318"/>
    <property type="project" value="GO_Central"/>
</dbReference>
<dbReference type="CDD" id="cd08933">
    <property type="entry name" value="RDH_SDR_c"/>
    <property type="match status" value="1"/>
</dbReference>
<dbReference type="FunFam" id="3.40.50.720:FF:000600">
    <property type="entry name" value="17-beta-hydroxysteroid dehydrogenase 14"/>
    <property type="match status" value="1"/>
</dbReference>
<dbReference type="Gene3D" id="3.40.50.720">
    <property type="entry name" value="NAD(P)-binding Rossmann-like Domain"/>
    <property type="match status" value="1"/>
</dbReference>
<dbReference type="InterPro" id="IPR036291">
    <property type="entry name" value="NAD(P)-bd_dom_sf"/>
</dbReference>
<dbReference type="InterPro" id="IPR020904">
    <property type="entry name" value="Sc_DH/Rdtase_CS"/>
</dbReference>
<dbReference type="InterPro" id="IPR002347">
    <property type="entry name" value="SDR_fam"/>
</dbReference>
<dbReference type="NCBIfam" id="NF005559">
    <property type="entry name" value="PRK07231.1"/>
    <property type="match status" value="1"/>
</dbReference>
<dbReference type="PANTHER" id="PTHR43658:SF8">
    <property type="entry name" value="17-BETA-HYDROXYSTEROID DEHYDROGENASE 14-RELATED"/>
    <property type="match status" value="1"/>
</dbReference>
<dbReference type="PANTHER" id="PTHR43658">
    <property type="entry name" value="SHORT-CHAIN DEHYDROGENASE/REDUCTASE"/>
    <property type="match status" value="1"/>
</dbReference>
<dbReference type="Pfam" id="PF13561">
    <property type="entry name" value="adh_short_C2"/>
    <property type="match status" value="1"/>
</dbReference>
<dbReference type="PRINTS" id="PR00081">
    <property type="entry name" value="GDHRDH"/>
</dbReference>
<dbReference type="PRINTS" id="PR00080">
    <property type="entry name" value="SDRFAMILY"/>
</dbReference>
<dbReference type="SUPFAM" id="SSF51735">
    <property type="entry name" value="NAD(P)-binding Rossmann-fold domains"/>
    <property type="match status" value="1"/>
</dbReference>
<dbReference type="PROSITE" id="PS00061">
    <property type="entry name" value="ADH_SHORT"/>
    <property type="match status" value="1"/>
</dbReference>